<feature type="chain" id="PRO_0000179567" description="ATP-dependent Clp protease proteolytic subunit">
    <location>
        <begin position="1"/>
        <end position="196"/>
    </location>
</feature>
<feature type="active site" description="Nucleophile" evidence="1">
    <location>
        <position position="99"/>
    </location>
</feature>
<feature type="active site" evidence="1">
    <location>
        <position position="124"/>
    </location>
</feature>
<gene>
    <name evidence="1" type="primary">clpP</name>
    <name type="ordered locus">HH_0567</name>
</gene>
<protein>
    <recommendedName>
        <fullName evidence="1">ATP-dependent Clp protease proteolytic subunit</fullName>
        <ecNumber evidence="1">3.4.21.92</ecNumber>
    </recommendedName>
    <alternativeName>
        <fullName evidence="1">Endopeptidase Clp</fullName>
    </alternativeName>
</protein>
<keyword id="KW-0963">Cytoplasm</keyword>
<keyword id="KW-0378">Hydrolase</keyword>
<keyword id="KW-0645">Protease</keyword>
<keyword id="KW-1185">Reference proteome</keyword>
<keyword id="KW-0720">Serine protease</keyword>
<reference key="1">
    <citation type="journal article" date="2003" name="Proc. Natl. Acad. Sci. U.S.A.">
        <title>The complete genome sequence of the carcinogenic bacterium Helicobacter hepaticus.</title>
        <authorList>
            <person name="Suerbaum S."/>
            <person name="Josenhans C."/>
            <person name="Sterzenbach T."/>
            <person name="Drescher B."/>
            <person name="Brandt P."/>
            <person name="Bell M."/>
            <person name="Droege M."/>
            <person name="Fartmann B."/>
            <person name="Fischer H.-P."/>
            <person name="Ge Z."/>
            <person name="Hoerster A."/>
            <person name="Holland R."/>
            <person name="Klein K."/>
            <person name="Koenig J."/>
            <person name="Macko L."/>
            <person name="Mendz G.L."/>
            <person name="Nyakatura G."/>
            <person name="Schauer D.B."/>
            <person name="Shen Z."/>
            <person name="Weber J."/>
            <person name="Frosch M."/>
            <person name="Fox J.G."/>
        </authorList>
    </citation>
    <scope>NUCLEOTIDE SEQUENCE [LARGE SCALE GENOMIC DNA]</scope>
    <source>
        <strain>ATCC 51449 / 3B1</strain>
    </source>
</reference>
<organism>
    <name type="scientific">Helicobacter hepaticus (strain ATCC 51449 / 3B1)</name>
    <dbReference type="NCBI Taxonomy" id="235279"/>
    <lineage>
        <taxon>Bacteria</taxon>
        <taxon>Pseudomonadati</taxon>
        <taxon>Campylobacterota</taxon>
        <taxon>Epsilonproteobacteria</taxon>
        <taxon>Campylobacterales</taxon>
        <taxon>Helicobacteraceae</taxon>
        <taxon>Helicobacter</taxon>
    </lineage>
</organism>
<sequence>MSSYIPYVIERTGRGERSYDIYSRLLKDRIILLSGEINDHIASSIVAQLLFLEAEDPEKDINFYINSPGGVITSAFSIYDTMNYIHSDISTICIGQAASAGAFLLSSGTKGKRFSLPNSRIMIHQPLGGAQGQATDIEIQAREILRLKKILNEIMAHNTGQKIEKITQDTERDFFMSGEEAKKYGLVDEILTKSLK</sequence>
<comment type="function">
    <text evidence="1">Cleaves peptides in various proteins in a process that requires ATP hydrolysis. Has a chymotrypsin-like activity. Plays a major role in the degradation of misfolded proteins.</text>
</comment>
<comment type="catalytic activity">
    <reaction evidence="1">
        <text>Hydrolysis of proteins to small peptides in the presence of ATP and magnesium. alpha-casein is the usual test substrate. In the absence of ATP, only oligopeptides shorter than five residues are hydrolyzed (such as succinyl-Leu-Tyr-|-NHMec, and Leu-Tyr-Leu-|-Tyr-Trp, in which cleavage of the -Tyr-|-Leu- and -Tyr-|-Trp bonds also occurs).</text>
        <dbReference type="EC" id="3.4.21.92"/>
    </reaction>
</comment>
<comment type="subunit">
    <text evidence="1">Fourteen ClpP subunits assemble into 2 heptameric rings which stack back to back to give a disk-like structure with a central cavity, resembling the structure of eukaryotic proteasomes.</text>
</comment>
<comment type="subcellular location">
    <subcellularLocation>
        <location evidence="1">Cytoplasm</location>
    </subcellularLocation>
</comment>
<comment type="similarity">
    <text evidence="1">Belongs to the peptidase S14 family.</text>
</comment>
<dbReference type="EC" id="3.4.21.92" evidence="1"/>
<dbReference type="EMBL" id="AE017125">
    <property type="protein sequence ID" value="AAP77164.1"/>
    <property type="molecule type" value="Genomic_DNA"/>
</dbReference>
<dbReference type="RefSeq" id="WP_011115409.1">
    <property type="nucleotide sequence ID" value="NC_004917.1"/>
</dbReference>
<dbReference type="SMR" id="Q7VIN7"/>
<dbReference type="STRING" id="235279.HH_0567"/>
<dbReference type="MEROPS" id="S14.001"/>
<dbReference type="KEGG" id="hhe:HH_0567"/>
<dbReference type="eggNOG" id="COG0740">
    <property type="taxonomic scope" value="Bacteria"/>
</dbReference>
<dbReference type="HOGENOM" id="CLU_058707_3_2_7"/>
<dbReference type="OrthoDB" id="9802800at2"/>
<dbReference type="Proteomes" id="UP000002495">
    <property type="component" value="Chromosome"/>
</dbReference>
<dbReference type="GO" id="GO:0005737">
    <property type="term" value="C:cytoplasm"/>
    <property type="evidence" value="ECO:0007669"/>
    <property type="project" value="UniProtKB-SubCell"/>
</dbReference>
<dbReference type="GO" id="GO:0009368">
    <property type="term" value="C:endopeptidase Clp complex"/>
    <property type="evidence" value="ECO:0007669"/>
    <property type="project" value="TreeGrafter"/>
</dbReference>
<dbReference type="GO" id="GO:0004176">
    <property type="term" value="F:ATP-dependent peptidase activity"/>
    <property type="evidence" value="ECO:0007669"/>
    <property type="project" value="InterPro"/>
</dbReference>
<dbReference type="GO" id="GO:0051117">
    <property type="term" value="F:ATPase binding"/>
    <property type="evidence" value="ECO:0007669"/>
    <property type="project" value="TreeGrafter"/>
</dbReference>
<dbReference type="GO" id="GO:0004252">
    <property type="term" value="F:serine-type endopeptidase activity"/>
    <property type="evidence" value="ECO:0007669"/>
    <property type="project" value="UniProtKB-UniRule"/>
</dbReference>
<dbReference type="GO" id="GO:0006515">
    <property type="term" value="P:protein quality control for misfolded or incompletely synthesized proteins"/>
    <property type="evidence" value="ECO:0007669"/>
    <property type="project" value="TreeGrafter"/>
</dbReference>
<dbReference type="CDD" id="cd07017">
    <property type="entry name" value="S14_ClpP_2"/>
    <property type="match status" value="1"/>
</dbReference>
<dbReference type="FunFam" id="3.90.226.10:FF:000001">
    <property type="entry name" value="ATP-dependent Clp protease proteolytic subunit"/>
    <property type="match status" value="1"/>
</dbReference>
<dbReference type="Gene3D" id="3.90.226.10">
    <property type="entry name" value="2-enoyl-CoA Hydratase, Chain A, domain 1"/>
    <property type="match status" value="1"/>
</dbReference>
<dbReference type="HAMAP" id="MF_00444">
    <property type="entry name" value="ClpP"/>
    <property type="match status" value="1"/>
</dbReference>
<dbReference type="InterPro" id="IPR001907">
    <property type="entry name" value="ClpP"/>
</dbReference>
<dbReference type="InterPro" id="IPR029045">
    <property type="entry name" value="ClpP/crotonase-like_dom_sf"/>
</dbReference>
<dbReference type="InterPro" id="IPR023562">
    <property type="entry name" value="ClpP/TepA"/>
</dbReference>
<dbReference type="InterPro" id="IPR033135">
    <property type="entry name" value="ClpP_His_AS"/>
</dbReference>
<dbReference type="InterPro" id="IPR018215">
    <property type="entry name" value="ClpP_Ser_AS"/>
</dbReference>
<dbReference type="NCBIfam" id="TIGR00493">
    <property type="entry name" value="clpP"/>
    <property type="match status" value="1"/>
</dbReference>
<dbReference type="NCBIfam" id="NF001368">
    <property type="entry name" value="PRK00277.1"/>
    <property type="match status" value="1"/>
</dbReference>
<dbReference type="NCBIfam" id="NF009205">
    <property type="entry name" value="PRK12553.1"/>
    <property type="match status" value="1"/>
</dbReference>
<dbReference type="PANTHER" id="PTHR10381">
    <property type="entry name" value="ATP-DEPENDENT CLP PROTEASE PROTEOLYTIC SUBUNIT"/>
    <property type="match status" value="1"/>
</dbReference>
<dbReference type="PANTHER" id="PTHR10381:SF70">
    <property type="entry name" value="ATP-DEPENDENT CLP PROTEASE PROTEOLYTIC SUBUNIT"/>
    <property type="match status" value="1"/>
</dbReference>
<dbReference type="Pfam" id="PF00574">
    <property type="entry name" value="CLP_protease"/>
    <property type="match status" value="1"/>
</dbReference>
<dbReference type="PRINTS" id="PR00127">
    <property type="entry name" value="CLPPROTEASEP"/>
</dbReference>
<dbReference type="SUPFAM" id="SSF52096">
    <property type="entry name" value="ClpP/crotonase"/>
    <property type="match status" value="1"/>
</dbReference>
<dbReference type="PROSITE" id="PS00382">
    <property type="entry name" value="CLP_PROTEASE_HIS"/>
    <property type="match status" value="1"/>
</dbReference>
<dbReference type="PROSITE" id="PS00381">
    <property type="entry name" value="CLP_PROTEASE_SER"/>
    <property type="match status" value="1"/>
</dbReference>
<name>CLPP_HELHP</name>
<proteinExistence type="inferred from homology"/>
<accession>Q7VIN7</accession>
<evidence type="ECO:0000255" key="1">
    <source>
        <dbReference type="HAMAP-Rule" id="MF_00444"/>
    </source>
</evidence>